<sequence length="379" mass="41928">MPTSEQNEFSHGSVGVVYTQSIRFESLTLEGGETITPLEIAYETYGTLNEKKDNAILVCHALSGDAHAAGFHEGDKRPGWWDYYIGPGKSFDTNRYFIISSNVIGGCKGSSGPLTINGKNGKPFQSTFPFVSIGDMVNAQEKLISHFGIHKLFAVAGGSMGGMQALQWSVAYPDRLKNCIVMASSSEHSAQQIAFNEVGRQAILSDPNWNQGLYTQENRPSKGLALARMMGHITYLSDEMMREKFGRKPPKGNIQSTDFAVGSYLIYQGESFVDRFDANSYIYVTKALDHFSLGTGKELTKVLAKVRCRFLVVAYTSDWLYPPYQSEEIVKSLEVNAVPVSFVELNNPAGRHDSFLLPSEQQDSILRDFLSSTDEGVFL</sequence>
<accession>P94891</accession>
<organism>
    <name type="scientific">Leptospira meyeri</name>
    <dbReference type="NCBI Taxonomy" id="29508"/>
    <lineage>
        <taxon>Bacteria</taxon>
        <taxon>Pseudomonadati</taxon>
        <taxon>Spirochaetota</taxon>
        <taxon>Spirochaetia</taxon>
        <taxon>Leptospirales</taxon>
        <taxon>Leptospiraceae</taxon>
        <taxon>Leptospira</taxon>
    </lineage>
</organism>
<comment type="function">
    <text evidence="1">Transfers an acetyl group from acetyl-CoA to L-homoserine, forming acetyl-L-homoserine.</text>
</comment>
<comment type="catalytic activity">
    <reaction evidence="1">
        <text>L-homoserine + acetyl-CoA = O-acetyl-L-homoserine + CoA</text>
        <dbReference type="Rhea" id="RHEA:13701"/>
        <dbReference type="ChEBI" id="CHEBI:57287"/>
        <dbReference type="ChEBI" id="CHEBI:57288"/>
        <dbReference type="ChEBI" id="CHEBI:57476"/>
        <dbReference type="ChEBI" id="CHEBI:57716"/>
        <dbReference type="EC" id="2.3.1.31"/>
    </reaction>
</comment>
<comment type="pathway">
    <text evidence="1">Amino-acid biosynthesis; L-methionine biosynthesis via de novo pathway; O-acetyl-L-homoserine from L-homoserine: step 1/1.</text>
</comment>
<comment type="subunit">
    <text evidence="1">Homodimer.</text>
</comment>
<comment type="subcellular location">
    <subcellularLocation>
        <location evidence="1">Cytoplasm</location>
    </subcellularLocation>
</comment>
<comment type="similarity">
    <text evidence="1">Belongs to the AB hydrolase superfamily. MetX family.</text>
</comment>
<proteinExistence type="inferred from homology"/>
<evidence type="ECO:0000255" key="1">
    <source>
        <dbReference type="HAMAP-Rule" id="MF_00296"/>
    </source>
</evidence>
<keyword id="KW-0012">Acyltransferase</keyword>
<keyword id="KW-0028">Amino-acid biosynthesis</keyword>
<keyword id="KW-0963">Cytoplasm</keyword>
<keyword id="KW-0486">Methionine biosynthesis</keyword>
<keyword id="KW-0808">Transferase</keyword>
<feature type="chain" id="PRO_0000155723" description="Homoserine O-acetyltransferase">
    <location>
        <begin position="1"/>
        <end position="379"/>
    </location>
</feature>
<feature type="domain" description="AB hydrolase-1" evidence="1">
    <location>
        <begin position="54"/>
        <end position="332"/>
    </location>
</feature>
<feature type="active site" description="Nucleophile" evidence="1">
    <location>
        <position position="159"/>
    </location>
</feature>
<feature type="active site" evidence="1">
    <location>
        <position position="318"/>
    </location>
</feature>
<feature type="active site" evidence="1">
    <location>
        <position position="352"/>
    </location>
</feature>
<feature type="binding site" evidence="1">
    <location>
        <position position="228"/>
    </location>
    <ligand>
        <name>substrate</name>
    </ligand>
</feature>
<feature type="binding site" evidence="1">
    <location>
        <position position="353"/>
    </location>
    <ligand>
        <name>substrate</name>
    </ligand>
</feature>
<name>METXA_LEPME</name>
<dbReference type="EC" id="2.3.1.31" evidence="1"/>
<dbReference type="EMBL" id="Y10744">
    <property type="protein sequence ID" value="CAA71733.1"/>
    <property type="molecule type" value="Genomic_DNA"/>
</dbReference>
<dbReference type="PIR" id="T44656">
    <property type="entry name" value="T44656"/>
</dbReference>
<dbReference type="SMR" id="P94891"/>
<dbReference type="STRING" id="1193051.LEP1GSC017_3347"/>
<dbReference type="ESTHER" id="lepme-metx">
    <property type="family name" value="Homoserine_transacetylase"/>
</dbReference>
<dbReference type="BioCyc" id="MetaCyc:MONOMER-9364"/>
<dbReference type="BRENDA" id="2.3.1.31">
    <property type="organism ID" value="2987"/>
</dbReference>
<dbReference type="UniPathway" id="UPA00051">
    <property type="reaction ID" value="UER00074"/>
</dbReference>
<dbReference type="GO" id="GO:0005737">
    <property type="term" value="C:cytoplasm"/>
    <property type="evidence" value="ECO:0007669"/>
    <property type="project" value="UniProtKB-SubCell"/>
</dbReference>
<dbReference type="GO" id="GO:0004414">
    <property type="term" value="F:homoserine O-acetyltransferase activity"/>
    <property type="evidence" value="ECO:0007669"/>
    <property type="project" value="UniProtKB-UniRule"/>
</dbReference>
<dbReference type="GO" id="GO:0009092">
    <property type="term" value="P:homoserine metabolic process"/>
    <property type="evidence" value="ECO:0007669"/>
    <property type="project" value="TreeGrafter"/>
</dbReference>
<dbReference type="GO" id="GO:0009086">
    <property type="term" value="P:methionine biosynthetic process"/>
    <property type="evidence" value="ECO:0007669"/>
    <property type="project" value="UniProtKB-UniRule"/>
</dbReference>
<dbReference type="FunFam" id="1.10.1740.110:FF:000001">
    <property type="entry name" value="Homoserine O-acetyltransferase"/>
    <property type="match status" value="1"/>
</dbReference>
<dbReference type="Gene3D" id="1.10.1740.110">
    <property type="match status" value="1"/>
</dbReference>
<dbReference type="Gene3D" id="3.40.50.1820">
    <property type="entry name" value="alpha/beta hydrolase"/>
    <property type="match status" value="1"/>
</dbReference>
<dbReference type="HAMAP" id="MF_00296">
    <property type="entry name" value="MetX_acyltransf"/>
    <property type="match status" value="1"/>
</dbReference>
<dbReference type="InterPro" id="IPR000073">
    <property type="entry name" value="AB_hydrolase_1"/>
</dbReference>
<dbReference type="InterPro" id="IPR029058">
    <property type="entry name" value="AB_hydrolase_fold"/>
</dbReference>
<dbReference type="InterPro" id="IPR008220">
    <property type="entry name" value="HAT_MetX-like"/>
</dbReference>
<dbReference type="NCBIfam" id="TIGR01392">
    <property type="entry name" value="homoserO_Ac_trn"/>
    <property type="match status" value="1"/>
</dbReference>
<dbReference type="NCBIfam" id="NF001209">
    <property type="entry name" value="PRK00175.1"/>
    <property type="match status" value="1"/>
</dbReference>
<dbReference type="PANTHER" id="PTHR32268">
    <property type="entry name" value="HOMOSERINE O-ACETYLTRANSFERASE"/>
    <property type="match status" value="1"/>
</dbReference>
<dbReference type="PANTHER" id="PTHR32268:SF11">
    <property type="entry name" value="HOMOSERINE O-ACETYLTRANSFERASE"/>
    <property type="match status" value="1"/>
</dbReference>
<dbReference type="Pfam" id="PF00561">
    <property type="entry name" value="Abhydrolase_1"/>
    <property type="match status" value="1"/>
</dbReference>
<dbReference type="PIRSF" id="PIRSF000443">
    <property type="entry name" value="Homoser_Ac_trans"/>
    <property type="match status" value="1"/>
</dbReference>
<dbReference type="SUPFAM" id="SSF53474">
    <property type="entry name" value="alpha/beta-Hydrolases"/>
    <property type="match status" value="1"/>
</dbReference>
<reference key="1">
    <citation type="journal article" date="1997" name="J. Bacteriol.">
        <title>Homoserine O-acetyltransferase, involved in the Leptospira meyeri methionine biosynthetic pathway, is not feedback inhibited.</title>
        <authorList>
            <person name="Bourhy P."/>
            <person name="Martel A."/>
            <person name="Margarita D."/>
            <person name="Saint Girons I."/>
            <person name="Belfaiza J."/>
        </authorList>
    </citation>
    <scope>NUCLEOTIDE SEQUENCE [GENOMIC DNA]</scope>
    <source>
        <strain>Serovar Semaranga / isolate Veldrat S 173</strain>
    </source>
</reference>
<protein>
    <recommendedName>
        <fullName evidence="1">Homoserine O-acetyltransferase</fullName>
        <shortName evidence="1">HAT</shortName>
        <ecNumber evidence="1">2.3.1.31</ecNumber>
    </recommendedName>
    <alternativeName>
        <fullName evidence="1">Homoserine transacetylase</fullName>
        <shortName evidence="1">HTA</shortName>
    </alternativeName>
</protein>
<gene>
    <name evidence="1" type="primary">metXA</name>
</gene>